<sequence>MSQRKIIHVDMDAFYASVEQRDRPGLRGRPVVVGGDPNGRGVVAAASYEARRHGIHSAMPAWRAARLCPDAVFLRPRFDVYRSISAQIQALFREYTPLVEPLSLDEAYLDVSDCPRRGGSATLIAREIRARIHEQTGLTASAGVSCNKFLAKIASDLDKPDGLHVIPPEQAEAFVAALPVGKIHGVGQATRQRMERMGVRTGADLRRLTLLELQRAFGSRARFYYELARGRDERPVRPRRERKSVGAETTFGEDLNNPAEMLERMAPLADKVAASLHRRGLAGRTVTLKVKYHDFRQITRSLSGRPVQSADEIRARLPALLQDTEAGDRPVRLLGVTVSGLVTVTPDQARQLALF</sequence>
<feature type="chain" id="PRO_1000163997" description="DNA polymerase IV">
    <location>
        <begin position="1"/>
        <end position="355"/>
    </location>
</feature>
<feature type="domain" description="UmuC" evidence="1">
    <location>
        <begin position="6"/>
        <end position="187"/>
    </location>
</feature>
<feature type="active site" evidence="1">
    <location>
        <position position="106"/>
    </location>
</feature>
<feature type="binding site" evidence="1">
    <location>
        <position position="10"/>
    </location>
    <ligand>
        <name>Mg(2+)</name>
        <dbReference type="ChEBI" id="CHEBI:18420"/>
    </ligand>
</feature>
<feature type="binding site" evidence="1">
    <location>
        <position position="105"/>
    </location>
    <ligand>
        <name>Mg(2+)</name>
        <dbReference type="ChEBI" id="CHEBI:18420"/>
    </ligand>
</feature>
<feature type="site" description="Substrate discrimination" evidence="1">
    <location>
        <position position="15"/>
    </location>
</feature>
<evidence type="ECO:0000255" key="1">
    <source>
        <dbReference type="HAMAP-Rule" id="MF_01113"/>
    </source>
</evidence>
<gene>
    <name evidence="1" type="primary">dinB</name>
    <name type="ordered locus">Mlg_2775</name>
</gene>
<accession>Q0A4X2</accession>
<name>DPO4_ALKEH</name>
<comment type="function">
    <text evidence="1">Poorly processive, error-prone DNA polymerase involved in untargeted mutagenesis. Copies undamaged DNA at stalled replication forks, which arise in vivo from mismatched or misaligned primer ends. These misaligned primers can be extended by PolIV. Exhibits no 3'-5' exonuclease (proofreading) activity. May be involved in translesional synthesis, in conjunction with the beta clamp from PolIII.</text>
</comment>
<comment type="catalytic activity">
    <reaction evidence="1">
        <text>DNA(n) + a 2'-deoxyribonucleoside 5'-triphosphate = DNA(n+1) + diphosphate</text>
        <dbReference type="Rhea" id="RHEA:22508"/>
        <dbReference type="Rhea" id="RHEA-COMP:17339"/>
        <dbReference type="Rhea" id="RHEA-COMP:17340"/>
        <dbReference type="ChEBI" id="CHEBI:33019"/>
        <dbReference type="ChEBI" id="CHEBI:61560"/>
        <dbReference type="ChEBI" id="CHEBI:173112"/>
        <dbReference type="EC" id="2.7.7.7"/>
    </reaction>
</comment>
<comment type="cofactor">
    <cofactor evidence="1">
        <name>Mg(2+)</name>
        <dbReference type="ChEBI" id="CHEBI:18420"/>
    </cofactor>
    <text evidence="1">Binds 2 magnesium ions per subunit.</text>
</comment>
<comment type="subunit">
    <text evidence="1">Monomer.</text>
</comment>
<comment type="subcellular location">
    <subcellularLocation>
        <location evidence="1">Cytoplasm</location>
    </subcellularLocation>
</comment>
<comment type="similarity">
    <text evidence="1">Belongs to the DNA polymerase type-Y family.</text>
</comment>
<reference key="1">
    <citation type="submission" date="2006-08" db="EMBL/GenBank/DDBJ databases">
        <title>Complete sequence of Alkalilimnicola ehrilichei MLHE-1.</title>
        <authorList>
            <person name="Copeland A."/>
            <person name="Lucas S."/>
            <person name="Lapidus A."/>
            <person name="Barry K."/>
            <person name="Detter J.C."/>
            <person name="Glavina del Rio T."/>
            <person name="Hammon N."/>
            <person name="Israni S."/>
            <person name="Dalin E."/>
            <person name="Tice H."/>
            <person name="Pitluck S."/>
            <person name="Sims D."/>
            <person name="Brettin T."/>
            <person name="Bruce D."/>
            <person name="Han C."/>
            <person name="Tapia R."/>
            <person name="Gilna P."/>
            <person name="Schmutz J."/>
            <person name="Larimer F."/>
            <person name="Land M."/>
            <person name="Hauser L."/>
            <person name="Kyrpides N."/>
            <person name="Mikhailova N."/>
            <person name="Oremland R.S."/>
            <person name="Hoeft S.E."/>
            <person name="Switzer-Blum J."/>
            <person name="Kulp T."/>
            <person name="King G."/>
            <person name="Tabita R."/>
            <person name="Witte B."/>
            <person name="Santini J.M."/>
            <person name="Basu P."/>
            <person name="Hollibaugh J.T."/>
            <person name="Xie G."/>
            <person name="Stolz J.F."/>
            <person name="Richardson P."/>
        </authorList>
    </citation>
    <scope>NUCLEOTIDE SEQUENCE [LARGE SCALE GENOMIC DNA]</scope>
    <source>
        <strain>ATCC BAA-1101 / DSM 17681 / MLHE-1</strain>
    </source>
</reference>
<keyword id="KW-0963">Cytoplasm</keyword>
<keyword id="KW-0227">DNA damage</keyword>
<keyword id="KW-0234">DNA repair</keyword>
<keyword id="KW-0235">DNA replication</keyword>
<keyword id="KW-0238">DNA-binding</keyword>
<keyword id="KW-0239">DNA-directed DNA polymerase</keyword>
<keyword id="KW-0460">Magnesium</keyword>
<keyword id="KW-0479">Metal-binding</keyword>
<keyword id="KW-0515">Mutator protein</keyword>
<keyword id="KW-0548">Nucleotidyltransferase</keyword>
<keyword id="KW-1185">Reference proteome</keyword>
<keyword id="KW-0808">Transferase</keyword>
<protein>
    <recommendedName>
        <fullName evidence="1">DNA polymerase IV</fullName>
        <shortName evidence="1">Pol IV</shortName>
        <ecNumber evidence="1">2.7.7.7</ecNumber>
    </recommendedName>
</protein>
<proteinExistence type="inferred from homology"/>
<organism>
    <name type="scientific">Alkalilimnicola ehrlichii (strain ATCC BAA-1101 / DSM 17681 / MLHE-1)</name>
    <dbReference type="NCBI Taxonomy" id="187272"/>
    <lineage>
        <taxon>Bacteria</taxon>
        <taxon>Pseudomonadati</taxon>
        <taxon>Pseudomonadota</taxon>
        <taxon>Gammaproteobacteria</taxon>
        <taxon>Chromatiales</taxon>
        <taxon>Ectothiorhodospiraceae</taxon>
        <taxon>Alkalilimnicola</taxon>
    </lineage>
</organism>
<dbReference type="EC" id="2.7.7.7" evidence="1"/>
<dbReference type="EMBL" id="CP000453">
    <property type="protein sequence ID" value="ABI58115.1"/>
    <property type="molecule type" value="Genomic_DNA"/>
</dbReference>
<dbReference type="SMR" id="Q0A4X2"/>
<dbReference type="KEGG" id="aeh:Mlg_2775"/>
<dbReference type="eggNOG" id="COG0389">
    <property type="taxonomic scope" value="Bacteria"/>
</dbReference>
<dbReference type="HOGENOM" id="CLU_012348_1_2_6"/>
<dbReference type="OrthoDB" id="9808813at2"/>
<dbReference type="Proteomes" id="UP000001962">
    <property type="component" value="Chromosome"/>
</dbReference>
<dbReference type="GO" id="GO:0005829">
    <property type="term" value="C:cytosol"/>
    <property type="evidence" value="ECO:0007669"/>
    <property type="project" value="TreeGrafter"/>
</dbReference>
<dbReference type="GO" id="GO:0003684">
    <property type="term" value="F:damaged DNA binding"/>
    <property type="evidence" value="ECO:0007669"/>
    <property type="project" value="InterPro"/>
</dbReference>
<dbReference type="GO" id="GO:0003887">
    <property type="term" value="F:DNA-directed DNA polymerase activity"/>
    <property type="evidence" value="ECO:0007669"/>
    <property type="project" value="UniProtKB-UniRule"/>
</dbReference>
<dbReference type="GO" id="GO:0000287">
    <property type="term" value="F:magnesium ion binding"/>
    <property type="evidence" value="ECO:0007669"/>
    <property type="project" value="UniProtKB-UniRule"/>
</dbReference>
<dbReference type="GO" id="GO:0006261">
    <property type="term" value="P:DNA-templated DNA replication"/>
    <property type="evidence" value="ECO:0007669"/>
    <property type="project" value="UniProtKB-UniRule"/>
</dbReference>
<dbReference type="GO" id="GO:0042276">
    <property type="term" value="P:error-prone translesion synthesis"/>
    <property type="evidence" value="ECO:0007669"/>
    <property type="project" value="TreeGrafter"/>
</dbReference>
<dbReference type="GO" id="GO:0009432">
    <property type="term" value="P:SOS response"/>
    <property type="evidence" value="ECO:0007669"/>
    <property type="project" value="TreeGrafter"/>
</dbReference>
<dbReference type="CDD" id="cd03586">
    <property type="entry name" value="PolY_Pol_IV_kappa"/>
    <property type="match status" value="1"/>
</dbReference>
<dbReference type="FunFam" id="3.30.1490.100:FF:000004">
    <property type="entry name" value="DNA polymerase IV"/>
    <property type="match status" value="1"/>
</dbReference>
<dbReference type="FunFam" id="3.40.1170.60:FF:000001">
    <property type="entry name" value="DNA polymerase IV"/>
    <property type="match status" value="1"/>
</dbReference>
<dbReference type="Gene3D" id="3.30.70.270">
    <property type="match status" value="1"/>
</dbReference>
<dbReference type="Gene3D" id="3.40.1170.60">
    <property type="match status" value="1"/>
</dbReference>
<dbReference type="Gene3D" id="1.10.150.20">
    <property type="entry name" value="5' to 3' exonuclease, C-terminal subdomain"/>
    <property type="match status" value="1"/>
</dbReference>
<dbReference type="Gene3D" id="3.30.1490.100">
    <property type="entry name" value="DNA polymerase, Y-family, little finger domain"/>
    <property type="match status" value="1"/>
</dbReference>
<dbReference type="HAMAP" id="MF_01113">
    <property type="entry name" value="DNApol_IV"/>
    <property type="match status" value="1"/>
</dbReference>
<dbReference type="InterPro" id="IPR043502">
    <property type="entry name" value="DNA/RNA_pol_sf"/>
</dbReference>
<dbReference type="InterPro" id="IPR036775">
    <property type="entry name" value="DNA_pol_Y-fam_lit_finger_sf"/>
</dbReference>
<dbReference type="InterPro" id="IPR017961">
    <property type="entry name" value="DNA_pol_Y-fam_little_finger"/>
</dbReference>
<dbReference type="InterPro" id="IPR050116">
    <property type="entry name" value="DNA_polymerase-Y"/>
</dbReference>
<dbReference type="InterPro" id="IPR022880">
    <property type="entry name" value="DNApol_IV"/>
</dbReference>
<dbReference type="InterPro" id="IPR053848">
    <property type="entry name" value="IMS_HHH_1"/>
</dbReference>
<dbReference type="InterPro" id="IPR043128">
    <property type="entry name" value="Rev_trsase/Diguanyl_cyclase"/>
</dbReference>
<dbReference type="InterPro" id="IPR001126">
    <property type="entry name" value="UmuC"/>
</dbReference>
<dbReference type="NCBIfam" id="NF002677">
    <property type="entry name" value="PRK02406.1"/>
    <property type="match status" value="1"/>
</dbReference>
<dbReference type="NCBIfam" id="NF002751">
    <property type="entry name" value="PRK02794.1"/>
    <property type="match status" value="1"/>
</dbReference>
<dbReference type="PANTHER" id="PTHR11076:SF33">
    <property type="entry name" value="DNA POLYMERASE KAPPA"/>
    <property type="match status" value="1"/>
</dbReference>
<dbReference type="PANTHER" id="PTHR11076">
    <property type="entry name" value="DNA REPAIR POLYMERASE UMUC / TRANSFERASE FAMILY MEMBER"/>
    <property type="match status" value="1"/>
</dbReference>
<dbReference type="Pfam" id="PF00817">
    <property type="entry name" value="IMS"/>
    <property type="match status" value="1"/>
</dbReference>
<dbReference type="Pfam" id="PF11799">
    <property type="entry name" value="IMS_C"/>
    <property type="match status" value="1"/>
</dbReference>
<dbReference type="Pfam" id="PF21999">
    <property type="entry name" value="IMS_HHH_1"/>
    <property type="match status" value="1"/>
</dbReference>
<dbReference type="SUPFAM" id="SSF56672">
    <property type="entry name" value="DNA/RNA polymerases"/>
    <property type="match status" value="1"/>
</dbReference>
<dbReference type="SUPFAM" id="SSF100879">
    <property type="entry name" value="Lesion bypass DNA polymerase (Y-family), little finger domain"/>
    <property type="match status" value="1"/>
</dbReference>
<dbReference type="PROSITE" id="PS50173">
    <property type="entry name" value="UMUC"/>
    <property type="match status" value="1"/>
</dbReference>